<comment type="function">
    <text evidence="1">Catalyzes the decarboxylation of four acetate groups of uroporphyrinogen-III to yield coproporphyrinogen-III.</text>
</comment>
<comment type="catalytic activity">
    <reaction evidence="1">
        <text>uroporphyrinogen III + 4 H(+) = coproporphyrinogen III + 4 CO2</text>
        <dbReference type="Rhea" id="RHEA:19865"/>
        <dbReference type="ChEBI" id="CHEBI:15378"/>
        <dbReference type="ChEBI" id="CHEBI:16526"/>
        <dbReference type="ChEBI" id="CHEBI:57308"/>
        <dbReference type="ChEBI" id="CHEBI:57309"/>
        <dbReference type="EC" id="4.1.1.37"/>
    </reaction>
</comment>
<comment type="pathway">
    <text evidence="1">Porphyrin-containing compound metabolism; protoporphyrin-IX biosynthesis; coproporphyrinogen-III from 5-aminolevulinate: step 4/4.</text>
</comment>
<comment type="subunit">
    <text evidence="1">Homodimer.</text>
</comment>
<comment type="subcellular location">
    <subcellularLocation>
        <location evidence="1">Cytoplasm</location>
    </subcellularLocation>
</comment>
<comment type="similarity">
    <text evidence="1">Belongs to the uroporphyrinogen decarboxylase family.</text>
</comment>
<sequence length="348" mass="39239">MVRTINETFLKACRGERTDYVPAWYMRQAGRSQPEYRKIKEKYSLFEITHNPELCAYVTKLPVDQYNVDAAILYKDIMSPLPAIGVDVEIKSGIGPVIDNPIRSLQDVEKLGEINPEDDVPYILDTIRLLTTEMLDVPLIGFSGAPFTLASYMIEGGPSRNYHNTKAFMYAEPKAWFALMDKLADMVITYLKAQINAGAKAVQIFDSWVGTVNVADYRVFIKPAMERIFAEVRKMGVPMIMHGVGAAHLVNEWHDLPLDVVGLDWRLPIEEARARGVHKAVQGNMDPSFLLAPWSVIEEHVKGILDQGMKQPGYIFNLGHGVFPEVNPDTLKRLTTFIHEYSKGQLAK</sequence>
<evidence type="ECO:0000255" key="1">
    <source>
        <dbReference type="HAMAP-Rule" id="MF_00218"/>
    </source>
</evidence>
<accession>B7HGF9</accession>
<name>DCUP_BACC4</name>
<organism>
    <name type="scientific">Bacillus cereus (strain B4264)</name>
    <dbReference type="NCBI Taxonomy" id="405532"/>
    <lineage>
        <taxon>Bacteria</taxon>
        <taxon>Bacillati</taxon>
        <taxon>Bacillota</taxon>
        <taxon>Bacilli</taxon>
        <taxon>Bacillales</taxon>
        <taxon>Bacillaceae</taxon>
        <taxon>Bacillus</taxon>
        <taxon>Bacillus cereus group</taxon>
    </lineage>
</organism>
<gene>
    <name evidence="1" type="primary">hemE</name>
    <name type="ordered locus">BCB4264_A1103</name>
</gene>
<feature type="chain" id="PRO_1000197509" description="Uroporphyrinogen decarboxylase">
    <location>
        <begin position="1"/>
        <end position="348"/>
    </location>
</feature>
<feature type="binding site" evidence="1">
    <location>
        <begin position="27"/>
        <end position="31"/>
    </location>
    <ligand>
        <name>substrate</name>
    </ligand>
</feature>
<feature type="binding site" evidence="1">
    <location>
        <position position="46"/>
    </location>
    <ligand>
        <name>substrate</name>
    </ligand>
</feature>
<feature type="binding site" evidence="1">
    <location>
        <position position="76"/>
    </location>
    <ligand>
        <name>substrate</name>
    </ligand>
</feature>
<feature type="binding site" evidence="1">
    <location>
        <position position="152"/>
    </location>
    <ligand>
        <name>substrate</name>
    </ligand>
</feature>
<feature type="binding site" evidence="1">
    <location>
        <position position="207"/>
    </location>
    <ligand>
        <name>substrate</name>
    </ligand>
</feature>
<feature type="binding site" evidence="1">
    <location>
        <position position="320"/>
    </location>
    <ligand>
        <name>substrate</name>
    </ligand>
</feature>
<feature type="site" description="Transition state stabilizer" evidence="1">
    <location>
        <position position="76"/>
    </location>
</feature>
<keyword id="KW-0963">Cytoplasm</keyword>
<keyword id="KW-0210">Decarboxylase</keyword>
<keyword id="KW-0456">Lyase</keyword>
<keyword id="KW-0627">Porphyrin biosynthesis</keyword>
<proteinExistence type="inferred from homology"/>
<protein>
    <recommendedName>
        <fullName evidence="1">Uroporphyrinogen decarboxylase</fullName>
        <shortName evidence="1">UPD</shortName>
        <shortName evidence="1">URO-D</shortName>
        <ecNumber evidence="1">4.1.1.37</ecNumber>
    </recommendedName>
</protein>
<reference key="1">
    <citation type="submission" date="2008-10" db="EMBL/GenBank/DDBJ databases">
        <title>Genome sequence of Bacillus cereus B4264.</title>
        <authorList>
            <person name="Dodson R.J."/>
            <person name="Durkin A.S."/>
            <person name="Rosovitz M.J."/>
            <person name="Rasko D.A."/>
            <person name="Hoffmaster A."/>
            <person name="Ravel J."/>
            <person name="Sutton G."/>
        </authorList>
    </citation>
    <scope>NUCLEOTIDE SEQUENCE [LARGE SCALE GENOMIC DNA]</scope>
    <source>
        <strain>B4264</strain>
    </source>
</reference>
<dbReference type="EC" id="4.1.1.37" evidence="1"/>
<dbReference type="EMBL" id="CP001176">
    <property type="protein sequence ID" value="ACK61299.1"/>
    <property type="molecule type" value="Genomic_DNA"/>
</dbReference>
<dbReference type="RefSeq" id="WP_000252605.1">
    <property type="nucleotide sequence ID" value="NZ_VEHB01000015.1"/>
</dbReference>
<dbReference type="SMR" id="B7HGF9"/>
<dbReference type="GeneID" id="67465593"/>
<dbReference type="KEGG" id="bcb:BCB4264_A1103"/>
<dbReference type="HOGENOM" id="CLU_040933_0_1_9"/>
<dbReference type="UniPathway" id="UPA00251">
    <property type="reaction ID" value="UER00321"/>
</dbReference>
<dbReference type="Proteomes" id="UP000007096">
    <property type="component" value="Chromosome"/>
</dbReference>
<dbReference type="GO" id="GO:0005829">
    <property type="term" value="C:cytosol"/>
    <property type="evidence" value="ECO:0007669"/>
    <property type="project" value="TreeGrafter"/>
</dbReference>
<dbReference type="GO" id="GO:0004853">
    <property type="term" value="F:uroporphyrinogen decarboxylase activity"/>
    <property type="evidence" value="ECO:0007669"/>
    <property type="project" value="UniProtKB-UniRule"/>
</dbReference>
<dbReference type="GO" id="GO:0006782">
    <property type="term" value="P:protoporphyrinogen IX biosynthetic process"/>
    <property type="evidence" value="ECO:0007669"/>
    <property type="project" value="UniProtKB-UniRule"/>
</dbReference>
<dbReference type="CDD" id="cd00717">
    <property type="entry name" value="URO-D"/>
    <property type="match status" value="1"/>
</dbReference>
<dbReference type="FunFam" id="3.20.20.210:FF:000005">
    <property type="entry name" value="Uroporphyrinogen decarboxylase"/>
    <property type="match status" value="1"/>
</dbReference>
<dbReference type="Gene3D" id="3.20.20.210">
    <property type="match status" value="1"/>
</dbReference>
<dbReference type="HAMAP" id="MF_00218">
    <property type="entry name" value="URO_D"/>
    <property type="match status" value="1"/>
</dbReference>
<dbReference type="InterPro" id="IPR038071">
    <property type="entry name" value="UROD/MetE-like_sf"/>
</dbReference>
<dbReference type="InterPro" id="IPR006361">
    <property type="entry name" value="Uroporphyrinogen_deCO2ase_HemE"/>
</dbReference>
<dbReference type="InterPro" id="IPR000257">
    <property type="entry name" value="Uroporphyrinogen_deCOase"/>
</dbReference>
<dbReference type="NCBIfam" id="TIGR01464">
    <property type="entry name" value="hemE"/>
    <property type="match status" value="1"/>
</dbReference>
<dbReference type="PANTHER" id="PTHR21091">
    <property type="entry name" value="METHYLTETRAHYDROFOLATE:HOMOCYSTEINE METHYLTRANSFERASE RELATED"/>
    <property type="match status" value="1"/>
</dbReference>
<dbReference type="PANTHER" id="PTHR21091:SF169">
    <property type="entry name" value="UROPORPHYRINOGEN DECARBOXYLASE"/>
    <property type="match status" value="1"/>
</dbReference>
<dbReference type="Pfam" id="PF01208">
    <property type="entry name" value="URO-D"/>
    <property type="match status" value="1"/>
</dbReference>
<dbReference type="SUPFAM" id="SSF51726">
    <property type="entry name" value="UROD/MetE-like"/>
    <property type="match status" value="1"/>
</dbReference>
<dbReference type="PROSITE" id="PS00906">
    <property type="entry name" value="UROD_1"/>
    <property type="match status" value="1"/>
</dbReference>
<dbReference type="PROSITE" id="PS00907">
    <property type="entry name" value="UROD_2"/>
    <property type="match status" value="1"/>
</dbReference>